<organism>
    <name type="scientific">Xanthomonas campestris pv. campestris (strain B100)</name>
    <dbReference type="NCBI Taxonomy" id="509169"/>
    <lineage>
        <taxon>Bacteria</taxon>
        <taxon>Pseudomonadati</taxon>
        <taxon>Pseudomonadota</taxon>
        <taxon>Gammaproteobacteria</taxon>
        <taxon>Lysobacterales</taxon>
        <taxon>Lysobacteraceae</taxon>
        <taxon>Xanthomonas</taxon>
    </lineage>
</organism>
<evidence type="ECO:0000255" key="1">
    <source>
        <dbReference type="HAMAP-Rule" id="MF_00023"/>
    </source>
</evidence>
<evidence type="ECO:0000256" key="2">
    <source>
        <dbReference type="SAM" id="MobiDB-lite"/>
    </source>
</evidence>
<gene>
    <name evidence="1" type="primary">smpB</name>
    <name type="ordered locus">xcc-b100_2807</name>
</gene>
<keyword id="KW-0963">Cytoplasm</keyword>
<keyword id="KW-0694">RNA-binding</keyword>
<comment type="function">
    <text evidence="1">Required for rescue of stalled ribosomes mediated by trans-translation. Binds to transfer-messenger RNA (tmRNA), required for stable association of tmRNA with ribosomes. tmRNA and SmpB together mimic tRNA shape, replacing the anticodon stem-loop with SmpB. tmRNA is encoded by the ssrA gene; the 2 termini fold to resemble tRNA(Ala) and it encodes a 'tag peptide', a short internal open reading frame. During trans-translation Ala-aminoacylated tmRNA acts like a tRNA, entering the A-site of stalled ribosomes, displacing the stalled mRNA. The ribosome then switches to translate the ORF on the tmRNA; the nascent peptide is terminated with the 'tag peptide' encoded by the tmRNA and targeted for degradation. The ribosome is freed to recommence translation, which seems to be the essential function of trans-translation.</text>
</comment>
<comment type="subcellular location">
    <subcellularLocation>
        <location evidence="1">Cytoplasm</location>
    </subcellularLocation>
    <text evidence="1">The tmRNA-SmpB complex associates with stalled 70S ribosomes.</text>
</comment>
<comment type="similarity">
    <text evidence="1">Belongs to the SmpB family.</text>
</comment>
<reference key="1">
    <citation type="journal article" date="2008" name="J. Biotechnol.">
        <title>The genome of Xanthomonas campestris pv. campestris B100 and its use for the reconstruction of metabolic pathways involved in xanthan biosynthesis.</title>
        <authorList>
            <person name="Vorhoelter F.-J."/>
            <person name="Schneiker S."/>
            <person name="Goesmann A."/>
            <person name="Krause L."/>
            <person name="Bekel T."/>
            <person name="Kaiser O."/>
            <person name="Linke B."/>
            <person name="Patschkowski T."/>
            <person name="Rueckert C."/>
            <person name="Schmid J."/>
            <person name="Sidhu V.K."/>
            <person name="Sieber V."/>
            <person name="Tauch A."/>
            <person name="Watt S.A."/>
            <person name="Weisshaar B."/>
            <person name="Becker A."/>
            <person name="Niehaus K."/>
            <person name="Puehler A."/>
        </authorList>
    </citation>
    <scope>NUCLEOTIDE SEQUENCE [LARGE SCALE GENOMIC DNA]</scope>
    <source>
        <strain>B100</strain>
    </source>
</reference>
<sequence>MSKKPAKDKAKSATATKTIALNKRARHEYHLEERYEAGLALQGWEVKAIRAGRANIVDGYAYVRSGEIYLIGAQITPLIQASTHVIPVERRDRKLLLHRAEIDKVLTRVEREGYTLVPTALYWSSNKVKLEIALAKGKQSHDKRDAAKERDWQRDKQRVMRRHNRDA</sequence>
<dbReference type="EMBL" id="AM920689">
    <property type="protein sequence ID" value="CAP52168.1"/>
    <property type="molecule type" value="Genomic_DNA"/>
</dbReference>
<dbReference type="SMR" id="B0RVV0"/>
<dbReference type="KEGG" id="xca:xcc-b100_2807"/>
<dbReference type="HOGENOM" id="CLU_108953_3_0_6"/>
<dbReference type="Proteomes" id="UP000001188">
    <property type="component" value="Chromosome"/>
</dbReference>
<dbReference type="GO" id="GO:0005829">
    <property type="term" value="C:cytosol"/>
    <property type="evidence" value="ECO:0007669"/>
    <property type="project" value="TreeGrafter"/>
</dbReference>
<dbReference type="GO" id="GO:0003723">
    <property type="term" value="F:RNA binding"/>
    <property type="evidence" value="ECO:0007669"/>
    <property type="project" value="UniProtKB-UniRule"/>
</dbReference>
<dbReference type="GO" id="GO:0070929">
    <property type="term" value="P:trans-translation"/>
    <property type="evidence" value="ECO:0007669"/>
    <property type="project" value="UniProtKB-UniRule"/>
</dbReference>
<dbReference type="CDD" id="cd09294">
    <property type="entry name" value="SmpB"/>
    <property type="match status" value="1"/>
</dbReference>
<dbReference type="Gene3D" id="2.40.280.10">
    <property type="match status" value="1"/>
</dbReference>
<dbReference type="HAMAP" id="MF_00023">
    <property type="entry name" value="SmpB"/>
    <property type="match status" value="1"/>
</dbReference>
<dbReference type="InterPro" id="IPR023620">
    <property type="entry name" value="SmpB"/>
</dbReference>
<dbReference type="InterPro" id="IPR000037">
    <property type="entry name" value="SsrA-bd_prot"/>
</dbReference>
<dbReference type="InterPro" id="IPR020081">
    <property type="entry name" value="SsrA-bd_prot_CS"/>
</dbReference>
<dbReference type="NCBIfam" id="NF003843">
    <property type="entry name" value="PRK05422.1"/>
    <property type="match status" value="1"/>
</dbReference>
<dbReference type="NCBIfam" id="TIGR00086">
    <property type="entry name" value="smpB"/>
    <property type="match status" value="1"/>
</dbReference>
<dbReference type="PANTHER" id="PTHR30308:SF2">
    <property type="entry name" value="SSRA-BINDING PROTEIN"/>
    <property type="match status" value="1"/>
</dbReference>
<dbReference type="PANTHER" id="PTHR30308">
    <property type="entry name" value="TMRNA-BINDING COMPONENT OF TRANS-TRANSLATION TAGGING COMPLEX"/>
    <property type="match status" value="1"/>
</dbReference>
<dbReference type="Pfam" id="PF01668">
    <property type="entry name" value="SmpB"/>
    <property type="match status" value="1"/>
</dbReference>
<dbReference type="SUPFAM" id="SSF74982">
    <property type="entry name" value="Small protein B (SmpB)"/>
    <property type="match status" value="1"/>
</dbReference>
<dbReference type="PROSITE" id="PS01317">
    <property type="entry name" value="SSRP"/>
    <property type="match status" value="1"/>
</dbReference>
<name>SSRP_XANCB</name>
<feature type="chain" id="PRO_1000090200" description="SsrA-binding protein">
    <location>
        <begin position="1"/>
        <end position="167"/>
    </location>
</feature>
<feature type="region of interest" description="Disordered" evidence="2">
    <location>
        <begin position="137"/>
        <end position="167"/>
    </location>
</feature>
<feature type="compositionally biased region" description="Basic and acidic residues" evidence="2">
    <location>
        <begin position="139"/>
        <end position="158"/>
    </location>
</feature>
<proteinExistence type="inferred from homology"/>
<accession>B0RVV0</accession>
<protein>
    <recommendedName>
        <fullName evidence="1">SsrA-binding protein</fullName>
    </recommendedName>
    <alternativeName>
        <fullName evidence="1">Small protein B</fullName>
    </alternativeName>
</protein>